<protein>
    <recommendedName>
        <fullName evidence="2">tRNA (guanine-N(7)-)-methyltransferase</fullName>
        <ecNumber evidence="2">2.1.1.33</ecNumber>
    </recommendedName>
    <alternativeName>
        <fullName evidence="2">tRNA (guanine(46)-N(7))-methyltransferase</fullName>
    </alternativeName>
    <alternativeName>
        <fullName evidence="2">tRNA(m7G46)-methyltransferase</fullName>
    </alternativeName>
</protein>
<accession>Q5NR81</accession>
<organism>
    <name type="scientific">Zymomonas mobilis subsp. mobilis (strain ATCC 31821 / ZM4 / CP4)</name>
    <dbReference type="NCBI Taxonomy" id="264203"/>
    <lineage>
        <taxon>Bacteria</taxon>
        <taxon>Pseudomonadati</taxon>
        <taxon>Pseudomonadota</taxon>
        <taxon>Alphaproteobacteria</taxon>
        <taxon>Sphingomonadales</taxon>
        <taxon>Zymomonadaceae</taxon>
        <taxon>Zymomonas</taxon>
    </lineage>
</organism>
<name>TRMB_ZYMMO</name>
<evidence type="ECO:0000250" key="1"/>
<evidence type="ECO:0000255" key="2">
    <source>
        <dbReference type="HAMAP-Rule" id="MF_01057"/>
    </source>
</evidence>
<keyword id="KW-0489">Methyltransferase</keyword>
<keyword id="KW-1185">Reference proteome</keyword>
<keyword id="KW-0949">S-adenosyl-L-methionine</keyword>
<keyword id="KW-0808">Transferase</keyword>
<keyword id="KW-0819">tRNA processing</keyword>
<comment type="function">
    <text evidence="2">Catalyzes the formation of N(7)-methylguanine at position 46 (m7G46) in tRNA.</text>
</comment>
<comment type="catalytic activity">
    <reaction evidence="2">
        <text>guanosine(46) in tRNA + S-adenosyl-L-methionine = N(7)-methylguanosine(46) in tRNA + S-adenosyl-L-homocysteine</text>
        <dbReference type="Rhea" id="RHEA:42708"/>
        <dbReference type="Rhea" id="RHEA-COMP:10188"/>
        <dbReference type="Rhea" id="RHEA-COMP:10189"/>
        <dbReference type="ChEBI" id="CHEBI:57856"/>
        <dbReference type="ChEBI" id="CHEBI:59789"/>
        <dbReference type="ChEBI" id="CHEBI:74269"/>
        <dbReference type="ChEBI" id="CHEBI:74480"/>
        <dbReference type="EC" id="2.1.1.33"/>
    </reaction>
</comment>
<comment type="pathway">
    <text evidence="2">tRNA modification; N(7)-methylguanine-tRNA biosynthesis.</text>
</comment>
<comment type="similarity">
    <text evidence="2">Belongs to the class I-like SAM-binding methyltransferase superfamily. TrmB family.</text>
</comment>
<dbReference type="EC" id="2.1.1.33" evidence="2"/>
<dbReference type="EMBL" id="AE008692">
    <property type="protein sequence ID" value="AAV88773.1"/>
    <property type="molecule type" value="Genomic_DNA"/>
</dbReference>
<dbReference type="RefSeq" id="WP_011240110.1">
    <property type="nucleotide sequence ID" value="NZ_CP035711.1"/>
</dbReference>
<dbReference type="SMR" id="Q5NR81"/>
<dbReference type="STRING" id="264203.ZMO0149"/>
<dbReference type="KEGG" id="zmo:ZMO0149"/>
<dbReference type="eggNOG" id="COG0220">
    <property type="taxonomic scope" value="Bacteria"/>
</dbReference>
<dbReference type="HOGENOM" id="CLU_050910_0_3_5"/>
<dbReference type="UniPathway" id="UPA00989"/>
<dbReference type="Proteomes" id="UP000001173">
    <property type="component" value="Chromosome"/>
</dbReference>
<dbReference type="GO" id="GO:0043527">
    <property type="term" value="C:tRNA methyltransferase complex"/>
    <property type="evidence" value="ECO:0007669"/>
    <property type="project" value="TreeGrafter"/>
</dbReference>
<dbReference type="GO" id="GO:0008176">
    <property type="term" value="F:tRNA (guanine(46)-N7)-methyltransferase activity"/>
    <property type="evidence" value="ECO:0007669"/>
    <property type="project" value="UniProtKB-UniRule"/>
</dbReference>
<dbReference type="Gene3D" id="3.40.50.150">
    <property type="entry name" value="Vaccinia Virus protein VP39"/>
    <property type="match status" value="1"/>
</dbReference>
<dbReference type="HAMAP" id="MF_01057">
    <property type="entry name" value="tRNA_methyltr_TrmB"/>
    <property type="match status" value="1"/>
</dbReference>
<dbReference type="InterPro" id="IPR029063">
    <property type="entry name" value="SAM-dependent_MTases_sf"/>
</dbReference>
<dbReference type="InterPro" id="IPR003358">
    <property type="entry name" value="tRNA_(Gua-N-7)_MeTrfase_Trmb"/>
</dbReference>
<dbReference type="InterPro" id="IPR055361">
    <property type="entry name" value="tRNA_methyltr_TrmB_bact"/>
</dbReference>
<dbReference type="PANTHER" id="PTHR23417">
    <property type="entry name" value="3-DEOXY-D-MANNO-OCTULOSONIC-ACID TRANSFERASE/TRNA GUANINE-N 7 - -METHYLTRANSFERASE"/>
    <property type="match status" value="1"/>
</dbReference>
<dbReference type="PANTHER" id="PTHR23417:SF14">
    <property type="entry name" value="PENTACOTRIPEPTIDE-REPEAT REGION OF PRORP DOMAIN-CONTAINING PROTEIN"/>
    <property type="match status" value="1"/>
</dbReference>
<dbReference type="Pfam" id="PF02390">
    <property type="entry name" value="Methyltransf_4"/>
    <property type="match status" value="1"/>
</dbReference>
<dbReference type="SUPFAM" id="SSF53335">
    <property type="entry name" value="S-adenosyl-L-methionine-dependent methyltransferases"/>
    <property type="match status" value="1"/>
</dbReference>
<dbReference type="PROSITE" id="PS51625">
    <property type="entry name" value="SAM_MT_TRMB"/>
    <property type="match status" value="1"/>
</dbReference>
<feature type="chain" id="PRO_0000229213" description="tRNA (guanine-N(7)-)-methyltransferase">
    <location>
        <begin position="1"/>
        <end position="231"/>
    </location>
</feature>
<feature type="active site" evidence="1">
    <location>
        <position position="136"/>
    </location>
</feature>
<feature type="binding site" evidence="2">
    <location>
        <position position="62"/>
    </location>
    <ligand>
        <name>S-adenosyl-L-methionine</name>
        <dbReference type="ChEBI" id="CHEBI:59789"/>
    </ligand>
</feature>
<feature type="binding site" evidence="2">
    <location>
        <position position="87"/>
    </location>
    <ligand>
        <name>S-adenosyl-L-methionine</name>
        <dbReference type="ChEBI" id="CHEBI:59789"/>
    </ligand>
</feature>
<feature type="binding site" evidence="2">
    <location>
        <position position="114"/>
    </location>
    <ligand>
        <name>S-adenosyl-L-methionine</name>
        <dbReference type="ChEBI" id="CHEBI:59789"/>
    </ligand>
</feature>
<feature type="binding site" evidence="2">
    <location>
        <position position="136"/>
    </location>
    <ligand>
        <name>S-adenosyl-L-methionine</name>
        <dbReference type="ChEBI" id="CHEBI:59789"/>
    </ligand>
</feature>
<feature type="binding site" evidence="2">
    <location>
        <position position="140"/>
    </location>
    <ligand>
        <name>substrate</name>
    </ligand>
</feature>
<feature type="binding site" evidence="2">
    <location>
        <position position="172"/>
    </location>
    <ligand>
        <name>substrate</name>
    </ligand>
</feature>
<feature type="binding site" evidence="2">
    <location>
        <begin position="210"/>
        <end position="213"/>
    </location>
    <ligand>
        <name>substrate</name>
    </ligand>
</feature>
<reference key="1">
    <citation type="journal article" date="2005" name="Nat. Biotechnol.">
        <title>The genome sequence of the ethanologenic bacterium Zymomonas mobilis ZM4.</title>
        <authorList>
            <person name="Seo J.-S."/>
            <person name="Chong H."/>
            <person name="Park H.S."/>
            <person name="Yoon K.-O."/>
            <person name="Jung C."/>
            <person name="Kim J.J."/>
            <person name="Hong J.H."/>
            <person name="Kim H."/>
            <person name="Kim J.-H."/>
            <person name="Kil J.-I."/>
            <person name="Park C.J."/>
            <person name="Oh H.-M."/>
            <person name="Lee J.-S."/>
            <person name="Jin S.-J."/>
            <person name="Um H.-W."/>
            <person name="Lee H.-J."/>
            <person name="Oh S.-J."/>
            <person name="Kim J.Y."/>
            <person name="Kang H.L."/>
            <person name="Lee S.Y."/>
            <person name="Lee K.J."/>
            <person name="Kang H.S."/>
        </authorList>
    </citation>
    <scope>NUCLEOTIDE SEQUENCE [LARGE SCALE GENOMIC DNA]</scope>
    <source>
        <strain>ATCC 31821 / ZM4 / CP4</strain>
    </source>
</reference>
<sequence length="231" mass="26946">MTESSIHDPLTIRRLYGRQQGHSLRPKQAELVETLLPQLEITTEQAVSATDLFGDDRPLEFEIGFGKGEHLAGQAMMRPDHGFIGCEPFLDGVVGLLTHIDNNQIKNIRLHRGDALDILEQLPDGCLDRAYLLHPDPWPKARHAKRRFMNHGPIGLIARKMKKGGEFRFGTDHPIYCHWAMMIMGQRPDFEWLAQTPRDFLQRPEDWPQTRYEKKAREKGHEVWYFRYRRV</sequence>
<proteinExistence type="inferred from homology"/>
<gene>
    <name evidence="2" type="primary">trmB</name>
    <name type="ordered locus">ZMO0149</name>
</gene>